<accession>A8AX17</accession>
<protein>
    <recommendedName>
        <fullName evidence="1">UvrABC system protein B</fullName>
        <shortName evidence="1">Protein UvrB</shortName>
    </recommendedName>
    <alternativeName>
        <fullName evidence="1">Excinuclease ABC subunit B</fullName>
    </alternativeName>
</protein>
<gene>
    <name evidence="1" type="primary">uvrB</name>
    <name type="ordered locus">SGO_1038</name>
</gene>
<organism>
    <name type="scientific">Streptococcus gordonii (strain Challis / ATCC 35105 / BCRC 15272 / CH1 / DL1 / V288)</name>
    <dbReference type="NCBI Taxonomy" id="467705"/>
    <lineage>
        <taxon>Bacteria</taxon>
        <taxon>Bacillati</taxon>
        <taxon>Bacillota</taxon>
        <taxon>Bacilli</taxon>
        <taxon>Lactobacillales</taxon>
        <taxon>Streptococcaceae</taxon>
        <taxon>Streptococcus</taxon>
    </lineage>
</organism>
<dbReference type="EMBL" id="CP000725">
    <property type="protein sequence ID" value="ABV09195.1"/>
    <property type="molecule type" value="Genomic_DNA"/>
</dbReference>
<dbReference type="RefSeq" id="WP_012000451.1">
    <property type="nucleotide sequence ID" value="NC_009785.1"/>
</dbReference>
<dbReference type="SMR" id="A8AX17"/>
<dbReference type="STRING" id="467705.SGO_1038"/>
<dbReference type="KEGG" id="sgo:SGO_1038"/>
<dbReference type="eggNOG" id="COG0556">
    <property type="taxonomic scope" value="Bacteria"/>
</dbReference>
<dbReference type="HOGENOM" id="CLU_009621_2_1_9"/>
<dbReference type="Proteomes" id="UP000001131">
    <property type="component" value="Chromosome"/>
</dbReference>
<dbReference type="GO" id="GO:0005737">
    <property type="term" value="C:cytoplasm"/>
    <property type="evidence" value="ECO:0007669"/>
    <property type="project" value="UniProtKB-SubCell"/>
</dbReference>
<dbReference type="GO" id="GO:0009380">
    <property type="term" value="C:excinuclease repair complex"/>
    <property type="evidence" value="ECO:0007669"/>
    <property type="project" value="InterPro"/>
</dbReference>
<dbReference type="GO" id="GO:0005524">
    <property type="term" value="F:ATP binding"/>
    <property type="evidence" value="ECO:0007669"/>
    <property type="project" value="UniProtKB-UniRule"/>
</dbReference>
<dbReference type="GO" id="GO:0016887">
    <property type="term" value="F:ATP hydrolysis activity"/>
    <property type="evidence" value="ECO:0007669"/>
    <property type="project" value="InterPro"/>
</dbReference>
<dbReference type="GO" id="GO:0003677">
    <property type="term" value="F:DNA binding"/>
    <property type="evidence" value="ECO:0007669"/>
    <property type="project" value="UniProtKB-UniRule"/>
</dbReference>
<dbReference type="GO" id="GO:0009381">
    <property type="term" value="F:excinuclease ABC activity"/>
    <property type="evidence" value="ECO:0007669"/>
    <property type="project" value="UniProtKB-UniRule"/>
</dbReference>
<dbReference type="GO" id="GO:0004386">
    <property type="term" value="F:helicase activity"/>
    <property type="evidence" value="ECO:0007669"/>
    <property type="project" value="UniProtKB-KW"/>
</dbReference>
<dbReference type="GO" id="GO:0006289">
    <property type="term" value="P:nucleotide-excision repair"/>
    <property type="evidence" value="ECO:0007669"/>
    <property type="project" value="UniProtKB-UniRule"/>
</dbReference>
<dbReference type="GO" id="GO:0009432">
    <property type="term" value="P:SOS response"/>
    <property type="evidence" value="ECO:0007669"/>
    <property type="project" value="UniProtKB-UniRule"/>
</dbReference>
<dbReference type="CDD" id="cd17916">
    <property type="entry name" value="DEXHc_UvrB"/>
    <property type="match status" value="1"/>
</dbReference>
<dbReference type="CDD" id="cd18790">
    <property type="entry name" value="SF2_C_UvrB"/>
    <property type="match status" value="1"/>
</dbReference>
<dbReference type="Gene3D" id="3.40.50.300">
    <property type="entry name" value="P-loop containing nucleotide triphosphate hydrolases"/>
    <property type="match status" value="3"/>
</dbReference>
<dbReference type="Gene3D" id="4.10.860.10">
    <property type="entry name" value="UVR domain"/>
    <property type="match status" value="1"/>
</dbReference>
<dbReference type="HAMAP" id="MF_00204">
    <property type="entry name" value="UvrB"/>
    <property type="match status" value="1"/>
</dbReference>
<dbReference type="InterPro" id="IPR006935">
    <property type="entry name" value="Helicase/UvrB_N"/>
</dbReference>
<dbReference type="InterPro" id="IPR014001">
    <property type="entry name" value="Helicase_ATP-bd"/>
</dbReference>
<dbReference type="InterPro" id="IPR001650">
    <property type="entry name" value="Helicase_C-like"/>
</dbReference>
<dbReference type="InterPro" id="IPR027417">
    <property type="entry name" value="P-loop_NTPase"/>
</dbReference>
<dbReference type="InterPro" id="IPR001943">
    <property type="entry name" value="UVR_dom"/>
</dbReference>
<dbReference type="InterPro" id="IPR036876">
    <property type="entry name" value="UVR_dom_sf"/>
</dbReference>
<dbReference type="InterPro" id="IPR004807">
    <property type="entry name" value="UvrB"/>
</dbReference>
<dbReference type="InterPro" id="IPR041471">
    <property type="entry name" value="UvrB_inter"/>
</dbReference>
<dbReference type="InterPro" id="IPR024759">
    <property type="entry name" value="UvrB_YAD/RRR_dom"/>
</dbReference>
<dbReference type="NCBIfam" id="NF003673">
    <property type="entry name" value="PRK05298.1"/>
    <property type="match status" value="1"/>
</dbReference>
<dbReference type="NCBIfam" id="TIGR00631">
    <property type="entry name" value="uvrb"/>
    <property type="match status" value="1"/>
</dbReference>
<dbReference type="PANTHER" id="PTHR24029">
    <property type="entry name" value="UVRABC SYSTEM PROTEIN B"/>
    <property type="match status" value="1"/>
</dbReference>
<dbReference type="PANTHER" id="PTHR24029:SF0">
    <property type="entry name" value="UVRABC SYSTEM PROTEIN B"/>
    <property type="match status" value="1"/>
</dbReference>
<dbReference type="Pfam" id="PF00271">
    <property type="entry name" value="Helicase_C"/>
    <property type="match status" value="1"/>
</dbReference>
<dbReference type="Pfam" id="PF04851">
    <property type="entry name" value="ResIII"/>
    <property type="match status" value="1"/>
</dbReference>
<dbReference type="Pfam" id="PF02151">
    <property type="entry name" value="UVR"/>
    <property type="match status" value="1"/>
</dbReference>
<dbReference type="Pfam" id="PF12344">
    <property type="entry name" value="UvrB"/>
    <property type="match status" value="1"/>
</dbReference>
<dbReference type="Pfam" id="PF17757">
    <property type="entry name" value="UvrB_inter"/>
    <property type="match status" value="1"/>
</dbReference>
<dbReference type="SMART" id="SM00487">
    <property type="entry name" value="DEXDc"/>
    <property type="match status" value="1"/>
</dbReference>
<dbReference type="SMART" id="SM00490">
    <property type="entry name" value="HELICc"/>
    <property type="match status" value="1"/>
</dbReference>
<dbReference type="SUPFAM" id="SSF46600">
    <property type="entry name" value="C-terminal UvrC-binding domain of UvrB"/>
    <property type="match status" value="1"/>
</dbReference>
<dbReference type="SUPFAM" id="SSF52540">
    <property type="entry name" value="P-loop containing nucleoside triphosphate hydrolases"/>
    <property type="match status" value="2"/>
</dbReference>
<dbReference type="PROSITE" id="PS51192">
    <property type="entry name" value="HELICASE_ATP_BIND_1"/>
    <property type="match status" value="1"/>
</dbReference>
<dbReference type="PROSITE" id="PS51194">
    <property type="entry name" value="HELICASE_CTER"/>
    <property type="match status" value="1"/>
</dbReference>
<dbReference type="PROSITE" id="PS50151">
    <property type="entry name" value="UVR"/>
    <property type="match status" value="1"/>
</dbReference>
<name>UVRB_STRGC</name>
<evidence type="ECO:0000255" key="1">
    <source>
        <dbReference type="HAMAP-Rule" id="MF_00204"/>
    </source>
</evidence>
<proteinExistence type="inferred from homology"/>
<feature type="chain" id="PRO_1000077923" description="UvrABC system protein B">
    <location>
        <begin position="1"/>
        <end position="662"/>
    </location>
</feature>
<feature type="domain" description="Helicase ATP-binding" evidence="1">
    <location>
        <begin position="31"/>
        <end position="188"/>
    </location>
</feature>
<feature type="domain" description="Helicase C-terminal" evidence="1">
    <location>
        <begin position="435"/>
        <end position="601"/>
    </location>
</feature>
<feature type="domain" description="UVR" evidence="1">
    <location>
        <begin position="626"/>
        <end position="661"/>
    </location>
</feature>
<feature type="short sequence motif" description="Beta-hairpin">
    <location>
        <begin position="97"/>
        <end position="120"/>
    </location>
</feature>
<feature type="binding site" evidence="1">
    <location>
        <begin position="44"/>
        <end position="51"/>
    </location>
    <ligand>
        <name>ATP</name>
        <dbReference type="ChEBI" id="CHEBI:30616"/>
    </ligand>
</feature>
<sequence length="662" mass="75695">MINRITDNKFELISKYEPSGDQPQAIEQLVDNIEGGEKAQILMGATGTGKTYTMSQVIAQVNKPTLVIAHNKTLAGQLYGEFKEFFPNNAVEYFVSYYDYYQPEAYVPSSDTYIEKDSSVNDEIDKLRHSATSALLERNDVIVVASVSCIYGLGSPKEYSDSVVSLRPGLEISRDKLLNDLVDIQFERNDIDFQRGKFRVRGDVVEIFPASRDEHAFRVEFFGDEIDRIREVEALTGRVLGEVDHLAIFPATHFVTNEDHMEVAIAKIQAELEEQLAKFEKEGKLLEAQRLKQRTEYDIEMLREMGYTNGVENYSRHMDGRSEGEPPYTLLDFFPDDFLIMIDESHMTMGQIRGMYNGDRSRKEMLVNYGFRLPSALDNRPLRREEFESHVHQIVYVSATPGDYENEQTDTVIEQIIRPTGLLDPEVEVRPTMGQIDDLLGEINARVEKNERTFITTLTKKMAEDLTDYFKEMGVKVKYMHSDIKTLERTEIIRDLRLGVFDVLVGINLLREGIDVPEVSLVAILDADKEGFLRNERGLIQTIGRAARNSEGHVIMYADTMTQSMQRAIDETARRRAIQMAYNEEHGIVPQTIKKEIRDLISVTKTALPDKEETVEIESLNKQERKDMIKKLEGQMQEAAGLLDFELAAQIRDMILEIKAMD</sequence>
<keyword id="KW-0067">ATP-binding</keyword>
<keyword id="KW-0963">Cytoplasm</keyword>
<keyword id="KW-0227">DNA damage</keyword>
<keyword id="KW-0228">DNA excision</keyword>
<keyword id="KW-0234">DNA repair</keyword>
<keyword id="KW-0267">Excision nuclease</keyword>
<keyword id="KW-0347">Helicase</keyword>
<keyword id="KW-0378">Hydrolase</keyword>
<keyword id="KW-0547">Nucleotide-binding</keyword>
<keyword id="KW-1185">Reference proteome</keyword>
<keyword id="KW-0742">SOS response</keyword>
<comment type="function">
    <text evidence="1">The UvrABC repair system catalyzes the recognition and processing of DNA lesions. A damage recognition complex composed of 2 UvrA and 2 UvrB subunits scans DNA for abnormalities. Upon binding of the UvrA(2)B(2) complex to a putative damaged site, the DNA wraps around one UvrB monomer. DNA wrap is dependent on ATP binding by UvrB and probably causes local melting of the DNA helix, facilitating insertion of UvrB beta-hairpin between the DNA strands. Then UvrB probes one DNA strand for the presence of a lesion. If a lesion is found the UvrA subunits dissociate and the UvrB-DNA preincision complex is formed. This complex is subsequently bound by UvrC and the second UvrB is released. If no lesion is found, the DNA wraps around the other UvrB subunit that will check the other stand for damage.</text>
</comment>
<comment type="subunit">
    <text evidence="1">Forms a heterotetramer with UvrA during the search for lesions. Interacts with UvrC in an incision complex.</text>
</comment>
<comment type="subcellular location">
    <subcellularLocation>
        <location evidence="1">Cytoplasm</location>
    </subcellularLocation>
</comment>
<comment type="domain">
    <text evidence="1">The beta-hairpin motif is involved in DNA binding.</text>
</comment>
<comment type="similarity">
    <text evidence="1">Belongs to the UvrB family.</text>
</comment>
<reference key="1">
    <citation type="journal article" date="2007" name="J. Bacteriol.">
        <title>Genome-wide transcriptional changes in Streptococcus gordonii in response to competence signaling peptide.</title>
        <authorList>
            <person name="Vickerman M.M."/>
            <person name="Iobst S."/>
            <person name="Jesionowski A.M."/>
            <person name="Gill S.R."/>
        </authorList>
    </citation>
    <scope>NUCLEOTIDE SEQUENCE [LARGE SCALE GENOMIC DNA]</scope>
    <source>
        <strain>Challis / ATCC 35105 / BCRC 15272 / CH1 / DL1 / V288</strain>
    </source>
</reference>